<evidence type="ECO:0000255" key="1">
    <source>
        <dbReference type="HAMAP-Rule" id="MF_01023"/>
    </source>
</evidence>
<feature type="chain" id="PRO_0000153504" description="Histidinol-phosphate aminotransferase">
    <location>
        <begin position="1"/>
        <end position="336"/>
    </location>
</feature>
<feature type="modified residue" description="N6-(pyridoxal phosphate)lysine" evidence="1">
    <location>
        <position position="204"/>
    </location>
</feature>
<keyword id="KW-0028">Amino-acid biosynthesis</keyword>
<keyword id="KW-0032">Aminotransferase</keyword>
<keyword id="KW-0368">Histidine biosynthesis</keyword>
<keyword id="KW-0663">Pyridoxal phosphate</keyword>
<keyword id="KW-1185">Reference proteome</keyword>
<keyword id="KW-0808">Transferase</keyword>
<sequence length="336" mass="37912">MIRNEVKAFKPYRVIEGNYRIWLDKNESPYDLPEELKEEIFEELKSVPFNRYPHITSMPAREAIGEFYGLPAENVAVGKGGDELIGYLVRLFEGDYIVTTPPTFGMYSFYARLNGIPVIEVPLREDFTIDGDTIAEKAKKASAVFIASPNNPTGNLQPVEEVLKVLETGKAVVVDEAYVEFAGKDLLGLLDEYPNLVLLRTFSKAFSLAGARVGYALASEEIIEALYRIKSPFSVDIFAQAVVKVVLRHPGLFRERIREIVRERERVRRSLGELAYPSDANFLLVKADAHSFLLERGIVVRKLSGRLKGHIRVTIGRRENDAFLKAMEEWKDVAGL</sequence>
<reference key="1">
    <citation type="journal article" date="2005" name="Genome Res.">
        <title>Complete genome sequence of the hyperthermophilic archaeon Thermococcus kodakaraensis KOD1 and comparison with Pyrococcus genomes.</title>
        <authorList>
            <person name="Fukui T."/>
            <person name="Atomi H."/>
            <person name="Kanai T."/>
            <person name="Matsumi R."/>
            <person name="Fujiwara S."/>
            <person name="Imanaka T."/>
        </authorList>
    </citation>
    <scope>NUCLEOTIDE SEQUENCE [LARGE SCALE GENOMIC DNA]</scope>
    <source>
        <strain>ATCC BAA-918 / JCM 12380 / KOD1</strain>
    </source>
</reference>
<comment type="catalytic activity">
    <reaction evidence="1">
        <text>L-histidinol phosphate + 2-oxoglutarate = 3-(imidazol-4-yl)-2-oxopropyl phosphate + L-glutamate</text>
        <dbReference type="Rhea" id="RHEA:23744"/>
        <dbReference type="ChEBI" id="CHEBI:16810"/>
        <dbReference type="ChEBI" id="CHEBI:29985"/>
        <dbReference type="ChEBI" id="CHEBI:57766"/>
        <dbReference type="ChEBI" id="CHEBI:57980"/>
        <dbReference type="EC" id="2.6.1.9"/>
    </reaction>
</comment>
<comment type="cofactor">
    <cofactor evidence="1">
        <name>pyridoxal 5'-phosphate</name>
        <dbReference type="ChEBI" id="CHEBI:597326"/>
    </cofactor>
</comment>
<comment type="pathway">
    <text evidence="1">Amino-acid biosynthesis; L-histidine biosynthesis; L-histidine from 5-phospho-alpha-D-ribose 1-diphosphate: step 7/9.</text>
</comment>
<comment type="similarity">
    <text evidence="1">Belongs to the class-II pyridoxal-phosphate-dependent aminotransferase family. Histidinol-phosphate aminotransferase subfamily.</text>
</comment>
<gene>
    <name evidence="1" type="primary">hisC</name>
    <name type="ordered locus">TK0250</name>
</gene>
<accession>Q5JFU6</accession>
<dbReference type="EC" id="2.6.1.9" evidence="1"/>
<dbReference type="EMBL" id="AP006878">
    <property type="protein sequence ID" value="BAD84439.1"/>
    <property type="molecule type" value="Genomic_DNA"/>
</dbReference>
<dbReference type="RefSeq" id="WP_011249205.1">
    <property type="nucleotide sequence ID" value="NC_006624.1"/>
</dbReference>
<dbReference type="SMR" id="Q5JFU6"/>
<dbReference type="FunCoup" id="Q5JFU6">
    <property type="interactions" value="87"/>
</dbReference>
<dbReference type="STRING" id="69014.TK0250"/>
<dbReference type="EnsemblBacteria" id="BAD84439">
    <property type="protein sequence ID" value="BAD84439"/>
    <property type="gene ID" value="TK0250"/>
</dbReference>
<dbReference type="GeneID" id="78446754"/>
<dbReference type="KEGG" id="tko:TK0250"/>
<dbReference type="PATRIC" id="fig|69014.16.peg.249"/>
<dbReference type="eggNOG" id="arCOG04273">
    <property type="taxonomic scope" value="Archaea"/>
</dbReference>
<dbReference type="HOGENOM" id="CLU_017584_3_1_2"/>
<dbReference type="InParanoid" id="Q5JFU6"/>
<dbReference type="OrthoDB" id="9929at2157"/>
<dbReference type="PhylomeDB" id="Q5JFU6"/>
<dbReference type="UniPathway" id="UPA00031">
    <property type="reaction ID" value="UER00012"/>
</dbReference>
<dbReference type="Proteomes" id="UP000000536">
    <property type="component" value="Chromosome"/>
</dbReference>
<dbReference type="GO" id="GO:0004400">
    <property type="term" value="F:histidinol-phosphate transaminase activity"/>
    <property type="evidence" value="ECO:0007669"/>
    <property type="project" value="UniProtKB-UniRule"/>
</dbReference>
<dbReference type="GO" id="GO:0030170">
    <property type="term" value="F:pyridoxal phosphate binding"/>
    <property type="evidence" value="ECO:0007669"/>
    <property type="project" value="InterPro"/>
</dbReference>
<dbReference type="GO" id="GO:0000105">
    <property type="term" value="P:L-histidine biosynthetic process"/>
    <property type="evidence" value="ECO:0007669"/>
    <property type="project" value="UniProtKB-UniRule"/>
</dbReference>
<dbReference type="CDD" id="cd00609">
    <property type="entry name" value="AAT_like"/>
    <property type="match status" value="1"/>
</dbReference>
<dbReference type="Gene3D" id="3.90.1150.10">
    <property type="entry name" value="Aspartate Aminotransferase, domain 1"/>
    <property type="match status" value="1"/>
</dbReference>
<dbReference type="Gene3D" id="3.40.640.10">
    <property type="entry name" value="Type I PLP-dependent aspartate aminotransferase-like (Major domain)"/>
    <property type="match status" value="1"/>
</dbReference>
<dbReference type="HAMAP" id="MF_01023">
    <property type="entry name" value="HisC_aminotrans_2"/>
    <property type="match status" value="1"/>
</dbReference>
<dbReference type="InterPro" id="IPR001917">
    <property type="entry name" value="Aminotrans_II_pyridoxalP_BS"/>
</dbReference>
<dbReference type="InterPro" id="IPR004839">
    <property type="entry name" value="Aminotransferase_I/II_large"/>
</dbReference>
<dbReference type="InterPro" id="IPR005861">
    <property type="entry name" value="HisP_aminotrans"/>
</dbReference>
<dbReference type="InterPro" id="IPR015424">
    <property type="entry name" value="PyrdxlP-dep_Trfase"/>
</dbReference>
<dbReference type="InterPro" id="IPR015421">
    <property type="entry name" value="PyrdxlP-dep_Trfase_major"/>
</dbReference>
<dbReference type="InterPro" id="IPR015422">
    <property type="entry name" value="PyrdxlP-dep_Trfase_small"/>
</dbReference>
<dbReference type="NCBIfam" id="TIGR01141">
    <property type="entry name" value="hisC"/>
    <property type="match status" value="1"/>
</dbReference>
<dbReference type="PANTHER" id="PTHR42885:SF2">
    <property type="entry name" value="HISTIDINOL-PHOSPHATE AMINOTRANSFERASE"/>
    <property type="match status" value="1"/>
</dbReference>
<dbReference type="PANTHER" id="PTHR42885">
    <property type="entry name" value="HISTIDINOL-PHOSPHATE AMINOTRANSFERASE-RELATED"/>
    <property type="match status" value="1"/>
</dbReference>
<dbReference type="Pfam" id="PF00155">
    <property type="entry name" value="Aminotran_1_2"/>
    <property type="match status" value="1"/>
</dbReference>
<dbReference type="SUPFAM" id="SSF53383">
    <property type="entry name" value="PLP-dependent transferases"/>
    <property type="match status" value="1"/>
</dbReference>
<dbReference type="PROSITE" id="PS00599">
    <property type="entry name" value="AA_TRANSFER_CLASS_2"/>
    <property type="match status" value="1"/>
</dbReference>
<proteinExistence type="inferred from homology"/>
<organism>
    <name type="scientific">Thermococcus kodakarensis (strain ATCC BAA-918 / JCM 12380 / KOD1)</name>
    <name type="common">Pyrococcus kodakaraensis (strain KOD1)</name>
    <dbReference type="NCBI Taxonomy" id="69014"/>
    <lineage>
        <taxon>Archaea</taxon>
        <taxon>Methanobacteriati</taxon>
        <taxon>Methanobacteriota</taxon>
        <taxon>Thermococci</taxon>
        <taxon>Thermococcales</taxon>
        <taxon>Thermococcaceae</taxon>
        <taxon>Thermococcus</taxon>
    </lineage>
</organism>
<protein>
    <recommendedName>
        <fullName evidence="1">Histidinol-phosphate aminotransferase</fullName>
        <ecNumber evidence="1">2.6.1.9</ecNumber>
    </recommendedName>
    <alternativeName>
        <fullName evidence="1">Imidazole acetol-phosphate transaminase</fullName>
    </alternativeName>
</protein>
<name>HIS8_THEKO</name>